<proteinExistence type="inferred from homology"/>
<keyword id="KW-0414">Isoprene biosynthesis</keyword>
<keyword id="KW-0456">Lyase</keyword>
<keyword id="KW-0479">Metal-binding</keyword>
<keyword id="KW-0511">Multifunctional enzyme</keyword>
<keyword id="KW-0548">Nucleotidyltransferase</keyword>
<keyword id="KW-1185">Reference proteome</keyword>
<keyword id="KW-0808">Transferase</keyword>
<feature type="chain" id="PRO_0000292856" description="Bifunctional enzyme IspD/IspF">
    <location>
        <begin position="1"/>
        <end position="403"/>
    </location>
</feature>
<feature type="region of interest" description="2-C-methyl-D-erythritol 4-phosphate cytidylyltransferase" evidence="1">
    <location>
        <begin position="1"/>
        <end position="234"/>
    </location>
</feature>
<feature type="region of interest" description="2-C-methyl-D-erythritol 2,4-cyclodiphosphate synthase" evidence="1">
    <location>
        <begin position="235"/>
        <end position="403"/>
    </location>
</feature>
<feature type="binding site" evidence="1">
    <location>
        <begin position="241"/>
        <end position="243"/>
    </location>
    <ligand>
        <name>4-CDP-2-C-methyl-D-erythritol 2-phosphate</name>
        <dbReference type="ChEBI" id="CHEBI:57919"/>
    </ligand>
</feature>
<feature type="binding site" evidence="1">
    <location>
        <position position="241"/>
    </location>
    <ligand>
        <name>a divalent metal cation</name>
        <dbReference type="ChEBI" id="CHEBI:60240"/>
    </ligand>
</feature>
<feature type="binding site" evidence="1">
    <location>
        <position position="243"/>
    </location>
    <ligand>
        <name>a divalent metal cation</name>
        <dbReference type="ChEBI" id="CHEBI:60240"/>
    </ligand>
</feature>
<feature type="binding site" evidence="1">
    <location>
        <begin position="267"/>
        <end position="268"/>
    </location>
    <ligand>
        <name>4-CDP-2-C-methyl-D-erythritol 2-phosphate</name>
        <dbReference type="ChEBI" id="CHEBI:57919"/>
    </ligand>
</feature>
<feature type="binding site" evidence="1">
    <location>
        <position position="275"/>
    </location>
    <ligand>
        <name>a divalent metal cation</name>
        <dbReference type="ChEBI" id="CHEBI:60240"/>
    </ligand>
</feature>
<feature type="binding site" evidence="1">
    <location>
        <begin position="289"/>
        <end position="291"/>
    </location>
    <ligand>
        <name>4-CDP-2-C-methyl-D-erythritol 2-phosphate</name>
        <dbReference type="ChEBI" id="CHEBI:57919"/>
    </ligand>
</feature>
<feature type="binding site" evidence="1">
    <location>
        <begin position="365"/>
        <end position="368"/>
    </location>
    <ligand>
        <name>4-CDP-2-C-methyl-D-erythritol 2-phosphate</name>
        <dbReference type="ChEBI" id="CHEBI:57919"/>
    </ligand>
</feature>
<feature type="binding site" evidence="1">
    <location>
        <position position="372"/>
    </location>
    <ligand>
        <name>4-CDP-2-C-methyl-D-erythritol 2-phosphate</name>
        <dbReference type="ChEBI" id="CHEBI:57919"/>
    </ligand>
</feature>
<feature type="binding site" evidence="1">
    <location>
        <position position="375"/>
    </location>
    <ligand>
        <name>4-CDP-2-C-methyl-D-erythritol 2-phosphate</name>
        <dbReference type="ChEBI" id="CHEBI:57919"/>
    </ligand>
</feature>
<feature type="site" description="Transition state stabilizer" evidence="1">
    <location>
        <position position="19"/>
    </location>
</feature>
<feature type="site" description="Transition state stabilizer" evidence="1">
    <location>
        <position position="26"/>
    </location>
</feature>
<feature type="site" description="Positions MEP for the nucleophilic attack" evidence="1">
    <location>
        <position position="156"/>
    </location>
</feature>
<feature type="site" description="Positions MEP for the nucleophilic attack" evidence="1">
    <location>
        <position position="213"/>
    </location>
</feature>
<feature type="site" description="Transition state stabilizer" evidence="1">
    <location>
        <position position="267"/>
    </location>
</feature>
<feature type="site" description="Transition state stabilizer" evidence="1">
    <location>
        <position position="366"/>
    </location>
</feature>
<protein>
    <recommendedName>
        <fullName evidence="1">Bifunctional enzyme IspD/IspF</fullName>
    </recommendedName>
    <domain>
        <recommendedName>
            <fullName evidence="1">2-C-methyl-D-erythritol 4-phosphate cytidylyltransferase</fullName>
            <ecNumber evidence="1">2.7.7.60</ecNumber>
        </recommendedName>
        <alternativeName>
            <fullName evidence="1">4-diphosphocytidyl-2C-methyl-D-erythritol synthase</fullName>
        </alternativeName>
        <alternativeName>
            <fullName evidence="1">MEP cytidylyltransferase</fullName>
            <shortName evidence="1">MCT</shortName>
        </alternativeName>
    </domain>
    <domain>
        <recommendedName>
            <fullName evidence="1">2-C-methyl-D-erythritol 2,4-cyclodiphosphate synthase</fullName>
            <shortName evidence="1">MECDP-synthase</shortName>
            <shortName evidence="1">MECPP-synthase</shortName>
            <shortName evidence="1">MECPS</shortName>
            <ecNumber evidence="1">4.6.1.12</ecNumber>
        </recommendedName>
    </domain>
</protein>
<comment type="function">
    <text evidence="1">Bifunctional enzyme that catalyzes the formation of 4-diphosphocytidyl-2-C-methyl-D-erythritol from CTP and 2-C-methyl-D-erythritol 4-phosphate (MEP) (IspD), and catalyzes the conversion of 4-diphosphocytidyl-2-C-methyl-D-erythritol 2-phosphate (CDP-ME2P) to 2-C-methyl-D-erythritol 2,4-cyclodiphosphate (ME-CPP) with a corresponding release of cytidine 5-monophosphate (CMP) (IspF).</text>
</comment>
<comment type="catalytic activity">
    <reaction evidence="1">
        <text>2-C-methyl-D-erythritol 4-phosphate + CTP + H(+) = 4-CDP-2-C-methyl-D-erythritol + diphosphate</text>
        <dbReference type="Rhea" id="RHEA:13429"/>
        <dbReference type="ChEBI" id="CHEBI:15378"/>
        <dbReference type="ChEBI" id="CHEBI:33019"/>
        <dbReference type="ChEBI" id="CHEBI:37563"/>
        <dbReference type="ChEBI" id="CHEBI:57823"/>
        <dbReference type="ChEBI" id="CHEBI:58262"/>
        <dbReference type="EC" id="2.7.7.60"/>
    </reaction>
</comment>
<comment type="catalytic activity">
    <reaction evidence="1">
        <text>4-CDP-2-C-methyl-D-erythritol 2-phosphate = 2-C-methyl-D-erythritol 2,4-cyclic diphosphate + CMP</text>
        <dbReference type="Rhea" id="RHEA:23864"/>
        <dbReference type="ChEBI" id="CHEBI:57919"/>
        <dbReference type="ChEBI" id="CHEBI:58483"/>
        <dbReference type="ChEBI" id="CHEBI:60377"/>
        <dbReference type="EC" id="4.6.1.12"/>
    </reaction>
</comment>
<comment type="cofactor">
    <cofactor evidence="1">
        <name>a divalent metal cation</name>
        <dbReference type="ChEBI" id="CHEBI:60240"/>
    </cofactor>
</comment>
<comment type="pathway">
    <text evidence="1">Isoprenoid biosynthesis; isopentenyl diphosphate biosynthesis via DXP pathway; isopentenyl diphosphate from 1-deoxy-D-xylulose 5-phosphate: step 2/6.</text>
</comment>
<comment type="pathway">
    <text evidence="1">Isoprenoid biosynthesis; isopentenyl diphosphate biosynthesis via DXP pathway; isopentenyl diphosphate from 1-deoxy-D-xylulose 5-phosphate: step 4/6.</text>
</comment>
<comment type="similarity">
    <text evidence="1">In the N-terminal section; belongs to the IspD/TarI cytidylyltransferase family. IspD subfamily.</text>
</comment>
<comment type="similarity">
    <text evidence="1">In the C-terminal section; belongs to the IspF family.</text>
</comment>
<comment type="sequence caution" evidence="2">
    <conflict type="erroneous initiation">
        <sequence resource="EMBL-CDS" id="ABE62648"/>
    </conflict>
    <text>Truncated N-terminus.</text>
</comment>
<organism>
    <name type="scientific">Nitrobacter hamburgensis (strain DSM 10229 / NCIMB 13809 / X14)</name>
    <dbReference type="NCBI Taxonomy" id="323097"/>
    <lineage>
        <taxon>Bacteria</taxon>
        <taxon>Pseudomonadati</taxon>
        <taxon>Pseudomonadota</taxon>
        <taxon>Alphaproteobacteria</taxon>
        <taxon>Hyphomicrobiales</taxon>
        <taxon>Nitrobacteraceae</taxon>
        <taxon>Nitrobacter</taxon>
    </lineage>
</organism>
<evidence type="ECO:0000255" key="1">
    <source>
        <dbReference type="HAMAP-Rule" id="MF_01520"/>
    </source>
</evidence>
<evidence type="ECO:0000305" key="2"/>
<sequence>MPTSKRTAAIIVAAGRGLRAGTGGPKQYRTIAGRTVIARAMEAFCDHPDVFAVQPVLNPDDLAMFNQAVAGFRYRPPANGGATRQASVHAGLEALAADAPDIVLIHDAARPFATPALIRRAIEATDITGAAVPVIPVTDTIKQVDASGAVNATPDRAKLRIAQTPQAFRFDVILDAHRRAARDGRDDFTDDAALAEWVGLTVATFEGDAANMKLTTPEDFVREEARLAAMLGDIRTGTGYDVHAFGDGDHVMLCGVKVPHNRGFLAHSDGDVGLHALVDAILGALADGDIGSHFPPSDPQWKGAASDKFLKYAVDRVAARGGRIANLEVTMICERPKIGPLRDTMRARIAEITGVAISRIAVKATTSERLGFTGREEGIATTASATVRLPWNDSDQEDKGWST</sequence>
<gene>
    <name evidence="1" type="primary">ispDF</name>
    <name type="ordered locus">Nham_1834</name>
</gene>
<name>ISPDF_NITHX</name>
<dbReference type="EC" id="2.7.7.60" evidence="1"/>
<dbReference type="EC" id="4.6.1.12" evidence="1"/>
<dbReference type="EMBL" id="CP000319">
    <property type="protein sequence ID" value="ABE62648.1"/>
    <property type="status" value="ALT_INIT"/>
    <property type="molecule type" value="Genomic_DNA"/>
</dbReference>
<dbReference type="RefSeq" id="WP_041357891.1">
    <property type="nucleotide sequence ID" value="NC_007964.1"/>
</dbReference>
<dbReference type="SMR" id="Q1QM99"/>
<dbReference type="STRING" id="323097.Nham_1834"/>
<dbReference type="KEGG" id="nha:Nham_1834"/>
<dbReference type="eggNOG" id="COG0245">
    <property type="taxonomic scope" value="Bacteria"/>
</dbReference>
<dbReference type="eggNOG" id="COG1211">
    <property type="taxonomic scope" value="Bacteria"/>
</dbReference>
<dbReference type="HOGENOM" id="CLU_042800_0_1_5"/>
<dbReference type="OrthoDB" id="9804336at2"/>
<dbReference type="UniPathway" id="UPA00056">
    <property type="reaction ID" value="UER00093"/>
</dbReference>
<dbReference type="UniPathway" id="UPA00056">
    <property type="reaction ID" value="UER00095"/>
</dbReference>
<dbReference type="Proteomes" id="UP000001953">
    <property type="component" value="Chromosome"/>
</dbReference>
<dbReference type="GO" id="GO:0008685">
    <property type="term" value="F:2-C-methyl-D-erythritol 2,4-cyclodiphosphate synthase activity"/>
    <property type="evidence" value="ECO:0007669"/>
    <property type="project" value="UniProtKB-UniRule"/>
</dbReference>
<dbReference type="GO" id="GO:0050518">
    <property type="term" value="F:2-C-methyl-D-erythritol 4-phosphate cytidylyltransferase activity"/>
    <property type="evidence" value="ECO:0007669"/>
    <property type="project" value="UniProtKB-UniRule"/>
</dbReference>
<dbReference type="GO" id="GO:0046872">
    <property type="term" value="F:metal ion binding"/>
    <property type="evidence" value="ECO:0007669"/>
    <property type="project" value="UniProtKB-KW"/>
</dbReference>
<dbReference type="GO" id="GO:0019288">
    <property type="term" value="P:isopentenyl diphosphate biosynthetic process, methylerythritol 4-phosphate pathway"/>
    <property type="evidence" value="ECO:0007669"/>
    <property type="project" value="UniProtKB-UniRule"/>
</dbReference>
<dbReference type="GO" id="GO:0016114">
    <property type="term" value="P:terpenoid biosynthetic process"/>
    <property type="evidence" value="ECO:0007669"/>
    <property type="project" value="InterPro"/>
</dbReference>
<dbReference type="CDD" id="cd02516">
    <property type="entry name" value="CDP-ME_synthetase"/>
    <property type="match status" value="1"/>
</dbReference>
<dbReference type="CDD" id="cd00554">
    <property type="entry name" value="MECDP_synthase"/>
    <property type="match status" value="1"/>
</dbReference>
<dbReference type="FunFam" id="3.90.550.10:FF:000003">
    <property type="entry name" value="2-C-methyl-D-erythritol 4-phosphate cytidylyltransferase"/>
    <property type="match status" value="1"/>
</dbReference>
<dbReference type="Gene3D" id="3.30.1330.50">
    <property type="entry name" value="2-C-methyl-D-erythritol 2,4-cyclodiphosphate synthase"/>
    <property type="match status" value="1"/>
</dbReference>
<dbReference type="Gene3D" id="3.90.550.10">
    <property type="entry name" value="Spore Coat Polysaccharide Biosynthesis Protein SpsA, Chain A"/>
    <property type="match status" value="1"/>
</dbReference>
<dbReference type="HAMAP" id="MF_00108">
    <property type="entry name" value="IspD"/>
    <property type="match status" value="1"/>
</dbReference>
<dbReference type="HAMAP" id="MF_01520">
    <property type="entry name" value="IspDF"/>
    <property type="match status" value="1"/>
</dbReference>
<dbReference type="HAMAP" id="MF_00107">
    <property type="entry name" value="IspF"/>
    <property type="match status" value="1"/>
</dbReference>
<dbReference type="InterPro" id="IPR001228">
    <property type="entry name" value="IspD"/>
</dbReference>
<dbReference type="InterPro" id="IPR026596">
    <property type="entry name" value="IspD/F"/>
</dbReference>
<dbReference type="InterPro" id="IPR034683">
    <property type="entry name" value="IspD/TarI"/>
</dbReference>
<dbReference type="InterPro" id="IPR018294">
    <property type="entry name" value="ISPD_synthase_CS"/>
</dbReference>
<dbReference type="InterPro" id="IPR003526">
    <property type="entry name" value="MECDP_synthase"/>
</dbReference>
<dbReference type="InterPro" id="IPR020555">
    <property type="entry name" value="MECDP_synthase_CS"/>
</dbReference>
<dbReference type="InterPro" id="IPR036571">
    <property type="entry name" value="MECDP_synthase_sf"/>
</dbReference>
<dbReference type="InterPro" id="IPR029044">
    <property type="entry name" value="Nucleotide-diphossugar_trans"/>
</dbReference>
<dbReference type="NCBIfam" id="TIGR00453">
    <property type="entry name" value="ispD"/>
    <property type="match status" value="1"/>
</dbReference>
<dbReference type="NCBIfam" id="TIGR00151">
    <property type="entry name" value="ispF"/>
    <property type="match status" value="1"/>
</dbReference>
<dbReference type="NCBIfam" id="NF006899">
    <property type="entry name" value="PRK09382.1"/>
    <property type="match status" value="1"/>
</dbReference>
<dbReference type="PANTHER" id="PTHR43181">
    <property type="entry name" value="2-C-METHYL-D-ERYTHRITOL 2,4-CYCLODIPHOSPHATE SYNTHASE, CHLOROPLASTIC"/>
    <property type="match status" value="1"/>
</dbReference>
<dbReference type="PANTHER" id="PTHR43181:SF1">
    <property type="entry name" value="2-C-METHYL-D-ERYTHRITOL 2,4-CYCLODIPHOSPHATE SYNTHASE, CHLOROPLASTIC"/>
    <property type="match status" value="1"/>
</dbReference>
<dbReference type="Pfam" id="PF01128">
    <property type="entry name" value="IspD"/>
    <property type="match status" value="1"/>
</dbReference>
<dbReference type="Pfam" id="PF02542">
    <property type="entry name" value="YgbB"/>
    <property type="match status" value="1"/>
</dbReference>
<dbReference type="SUPFAM" id="SSF69765">
    <property type="entry name" value="IpsF-like"/>
    <property type="match status" value="1"/>
</dbReference>
<dbReference type="SUPFAM" id="SSF53448">
    <property type="entry name" value="Nucleotide-diphospho-sugar transferases"/>
    <property type="match status" value="1"/>
</dbReference>
<dbReference type="PROSITE" id="PS01295">
    <property type="entry name" value="ISPD"/>
    <property type="match status" value="1"/>
</dbReference>
<dbReference type="PROSITE" id="PS01350">
    <property type="entry name" value="ISPF"/>
    <property type="match status" value="1"/>
</dbReference>
<accession>Q1QM99</accession>
<reference key="1">
    <citation type="submission" date="2006-03" db="EMBL/GenBank/DDBJ databases">
        <title>Complete sequence of chromosome of Nitrobacter hamburgensis X14.</title>
        <authorList>
            <consortium name="US DOE Joint Genome Institute"/>
            <person name="Copeland A."/>
            <person name="Lucas S."/>
            <person name="Lapidus A."/>
            <person name="Barry K."/>
            <person name="Detter J.C."/>
            <person name="Glavina del Rio T."/>
            <person name="Hammon N."/>
            <person name="Israni S."/>
            <person name="Dalin E."/>
            <person name="Tice H."/>
            <person name="Pitluck S."/>
            <person name="Chain P."/>
            <person name="Malfatti S."/>
            <person name="Shin M."/>
            <person name="Vergez L."/>
            <person name="Schmutz J."/>
            <person name="Larimer F."/>
            <person name="Land M."/>
            <person name="Hauser L."/>
            <person name="Kyrpides N."/>
            <person name="Ivanova N."/>
            <person name="Ward B."/>
            <person name="Arp D."/>
            <person name="Klotz M."/>
            <person name="Stein L."/>
            <person name="O'Mullan G."/>
            <person name="Starkenburg S."/>
            <person name="Sayavedra L."/>
            <person name="Poret-Peterson A.T."/>
            <person name="Gentry M.E."/>
            <person name="Bruce D."/>
            <person name="Richardson P."/>
        </authorList>
    </citation>
    <scope>NUCLEOTIDE SEQUENCE [LARGE SCALE GENOMIC DNA]</scope>
    <source>
        <strain>DSM 10229 / NCIMB 13809 / X14</strain>
    </source>
</reference>